<protein>
    <recommendedName>
        <fullName evidence="4">Protein DesVIII</fullName>
    </recommendedName>
    <alternativeName>
        <fullName>Inactive cytochrome DesVIII</fullName>
    </alternativeName>
</protein>
<comment type="function">
    <text evidence="1 2 3">Involved in the biosynthesis of the macrolide antibiotics methymycin, neomethymycin, narbomycin, and pikromycin. DesVIII assists the folding of the DesVII polypeptide. However, unlike chaperones, it remains bound to DesVII during catalysis, forming a tight DesVII/DesVIII complex. Although the formation of the DesVII/DesVIII complex is essential for the catalytic activity, DesVIII is unlikely to be involved in catalysis directly.</text>
</comment>
<comment type="pathway">
    <text evidence="7">Antibiotic biosynthesis.</text>
</comment>
<comment type="subunit">
    <text evidence="3">Forms a complex with DesVII.</text>
</comment>
<comment type="disruption phenotype">
    <text evidence="1 2 3">Cells lacking this gene are not able to produce glycosylated macrolides.</text>
</comment>
<comment type="miscellaneous">
    <text evidence="2 3">EryCII, OleP1 and DnrQ are able to replace DesVIII, however the total amount of glycosylated compounds is significantly reduced.</text>
</comment>
<comment type="similarity">
    <text evidence="6">Belongs to the cytochrome P450 family.</text>
</comment>
<comment type="caution">
    <text evidence="6">Although DesVIII shows significant similarity to cytochrome P450 family, it lacks the heme-binding sites. The conservation of amino acid sequence is confined primarily to the C-terminal half of the protein.</text>
</comment>
<proteinExistence type="evidence at protein level"/>
<name>DES8_STRVZ</name>
<dbReference type="EMBL" id="AF079762">
    <property type="protein sequence ID" value="AAC68676.1"/>
    <property type="molecule type" value="Genomic_DNA"/>
</dbReference>
<dbReference type="SMR" id="Q9ZGH8"/>
<dbReference type="KEGG" id="ag:AAC68676"/>
<dbReference type="GO" id="GO:0004497">
    <property type="term" value="F:monooxygenase activity"/>
    <property type="evidence" value="ECO:0007669"/>
    <property type="project" value="InterPro"/>
</dbReference>
<dbReference type="GO" id="GO:0016705">
    <property type="term" value="F:oxidoreductase activity, acting on paired donors, with incorporation or reduction of molecular oxygen"/>
    <property type="evidence" value="ECO:0007669"/>
    <property type="project" value="InterPro"/>
</dbReference>
<dbReference type="GO" id="GO:0017000">
    <property type="term" value="P:antibiotic biosynthetic process"/>
    <property type="evidence" value="ECO:0000315"/>
    <property type="project" value="UniProtKB"/>
</dbReference>
<dbReference type="CDD" id="cd11036">
    <property type="entry name" value="AknT-like"/>
    <property type="match status" value="1"/>
</dbReference>
<dbReference type="Gene3D" id="1.10.630.10">
    <property type="entry name" value="Cytochrome P450"/>
    <property type="match status" value="1"/>
</dbReference>
<dbReference type="InterPro" id="IPR001128">
    <property type="entry name" value="Cyt_P450"/>
</dbReference>
<dbReference type="InterPro" id="IPR002397">
    <property type="entry name" value="Cyt_P450_B"/>
</dbReference>
<dbReference type="InterPro" id="IPR036396">
    <property type="entry name" value="Cyt_P450_sf"/>
</dbReference>
<dbReference type="InterPro" id="IPR030958">
    <property type="entry name" value="P450-rel_GT_act"/>
</dbReference>
<dbReference type="NCBIfam" id="TIGR04515">
    <property type="entry name" value="P450_rel_GT_act"/>
    <property type="match status" value="1"/>
</dbReference>
<dbReference type="PANTHER" id="PTHR46696:SF1">
    <property type="entry name" value="CYTOCHROME P450 YJIB-RELATED"/>
    <property type="match status" value="1"/>
</dbReference>
<dbReference type="PANTHER" id="PTHR46696">
    <property type="entry name" value="P450, PUTATIVE (EUROFUNG)-RELATED"/>
    <property type="match status" value="1"/>
</dbReference>
<dbReference type="Pfam" id="PF00067">
    <property type="entry name" value="p450"/>
    <property type="match status" value="1"/>
</dbReference>
<dbReference type="PRINTS" id="PR00359">
    <property type="entry name" value="BP450"/>
</dbReference>
<dbReference type="SUPFAM" id="SSF48264">
    <property type="entry name" value="Cytochrome P450"/>
    <property type="match status" value="1"/>
</dbReference>
<sequence length="402" mass="41996">MTDDLTGALTQPPLGRTVRAVADRELGTHLLETRGIHWIHAANGDPYATVLRGQADDPYPAYERVRARGALSFSPTGSWVTADHALAASILCSTDFGVSGADGVPVPQQVLSYGEGCPLEREQVLPAAGDVPEGGQRAVVEGIHRETLEGLAPDPSASYAFELLGGFVRPAVTAAAAAVLGVPADRRADFADLLERLRPLSDSLLAPQSLRTVRAADGALAELTALLADSDDSPGALLSALGVTAAVQLTGNAVLALLAHPEQWRELCDRPGLAAAAVEETLRYDPPVQLDARVVRGETELAGRRLPAGAHVVVLTAATGRDPEVFTDPERFDLARPDAAAHLALHPAGPYGPVASLVRLQAEVALRTLAGRFPGLRQAGDVLRPRRAPVGRGPLSVPVSSS</sequence>
<accession>Q9ZGH8</accession>
<feature type="chain" id="PRO_0000435702" description="Protein DesVIII">
    <location>
        <begin position="1"/>
        <end position="402"/>
    </location>
</feature>
<evidence type="ECO:0000269" key="1">
    <source>
    </source>
</evidence>
<evidence type="ECO:0000269" key="2">
    <source>
    </source>
</evidence>
<evidence type="ECO:0000269" key="3">
    <source>
    </source>
</evidence>
<evidence type="ECO:0000303" key="4">
    <source>
    </source>
</evidence>
<evidence type="ECO:0000303" key="5">
    <source>
    </source>
</evidence>
<evidence type="ECO:0000305" key="6"/>
<evidence type="ECO:0000305" key="7">
    <source>
    </source>
</evidence>
<keyword id="KW-0045">Antibiotic biosynthesis</keyword>
<gene>
    <name evidence="5" type="primary">desVIII</name>
</gene>
<reference key="1">
    <citation type="journal article" date="1998" name="Proc. Natl. Acad. Sci. U.S.A.">
        <title>A gene cluster for macrolide antibiotic biosynthesis in Streptomyces venezuelae: architecture of metabolic diversity.</title>
        <authorList>
            <person name="Xue Y."/>
            <person name="Zhao L."/>
            <person name="Liu H.W."/>
            <person name="Sherman D.H."/>
        </authorList>
    </citation>
    <scope>NUCLEOTIDE SEQUENCE [GENOMIC DNA]</scope>
    <source>
        <strain>ATCC 15439 / DSM 41110 / IMRU3627 / M-2140</strain>
    </source>
</reference>
<reference key="2">
    <citation type="journal article" date="2004" name="J. Am. Chem. Soc.">
        <title>Characterization of the glycosyltransferase activity of desVII: analysis of and implications for the biosynthesis of macrolide antibiotics.</title>
        <authorList>
            <person name="Borisova S.A."/>
            <person name="Zhao L."/>
            <person name="Melancon C.E. III"/>
            <person name="Kao C.L."/>
            <person name="Liu H.W."/>
        </authorList>
    </citation>
    <scope>FUNCTION</scope>
    <scope>DISRUPTION PHENOTYPE</scope>
</reference>
<reference key="3">
    <citation type="journal article" date="2007" name="Gene">
        <title>Functional analysis of desVIII homologues involved in glycosylation of macrolide antibiotics by interspecies complementation.</title>
        <authorList>
            <person name="Hong J.S."/>
            <person name="Park S.J."/>
            <person name="Parajuli N."/>
            <person name="Park S.R."/>
            <person name="Koh H.S."/>
            <person name="Jung W.S."/>
            <person name="Choi C.Y."/>
            <person name="Yoon Y.J."/>
        </authorList>
    </citation>
    <scope>FUNCTION</scope>
    <scope>DISRUPTION PHENOTYPE</scope>
    <source>
        <strain>ATCC 15439 / DSM 41110 / IMRU3627 / M-2140</strain>
    </source>
</reference>
<reference key="4">
    <citation type="journal article" date="2010" name="Biochemistry">
        <title>Characterization of glycosyltransferase DesVII and its auxiliary partner protein DesVIII in the methymycin/picromycin biosynthetic pathway.</title>
        <authorList>
            <person name="Borisova S.A."/>
            <person name="Liu H.W."/>
        </authorList>
    </citation>
    <scope>FUNCTION</scope>
    <scope>DISRUPTION PHENOTYPE</scope>
    <scope>SUBUNIT</scope>
    <source>
        <strain>ATCC 15439 / DSM 41110 / IMRU3627 / M-2140</strain>
    </source>
</reference>
<organism>
    <name type="scientific">Streptomyces venezuelae</name>
    <dbReference type="NCBI Taxonomy" id="54571"/>
    <lineage>
        <taxon>Bacteria</taxon>
        <taxon>Bacillati</taxon>
        <taxon>Actinomycetota</taxon>
        <taxon>Actinomycetes</taxon>
        <taxon>Kitasatosporales</taxon>
        <taxon>Streptomycetaceae</taxon>
        <taxon>Streptomyces</taxon>
    </lineage>
</organism>